<keyword id="KW-0053">Apoptosis</keyword>
<keyword id="KW-0539">Nucleus</keyword>
<keyword id="KW-0649">Protein kinase inhibitor</keyword>
<keyword id="KW-1185">Reference proteome</keyword>
<keyword id="KW-0804">Transcription</keyword>
<keyword id="KW-0805">Transcription regulation</keyword>
<feature type="chain" id="PRO_0000131868" description="Tribbles homolog 3">
    <location>
        <begin position="1"/>
        <end position="349"/>
    </location>
</feature>
<feature type="domain" description="Protein kinase" evidence="4">
    <location>
        <begin position="63"/>
        <end position="310"/>
    </location>
</feature>
<feature type="region of interest" description="Interaction with DDIT3/CHOP" evidence="1">
    <location>
        <begin position="1"/>
        <end position="122"/>
    </location>
</feature>
<feature type="region of interest" description="Disordered" evidence="5">
    <location>
        <begin position="35"/>
        <end position="57"/>
    </location>
</feature>
<feature type="region of interest" description="Disordered" evidence="5">
    <location>
        <begin position="317"/>
        <end position="349"/>
    </location>
</feature>
<feature type="compositionally biased region" description="Acidic residues" evidence="5">
    <location>
        <begin position="336"/>
        <end position="349"/>
    </location>
</feature>
<organism>
    <name type="scientific">Rattus norvegicus</name>
    <name type="common">Rat</name>
    <dbReference type="NCBI Taxonomy" id="10116"/>
    <lineage>
        <taxon>Eukaryota</taxon>
        <taxon>Metazoa</taxon>
        <taxon>Chordata</taxon>
        <taxon>Craniata</taxon>
        <taxon>Vertebrata</taxon>
        <taxon>Euteleostomi</taxon>
        <taxon>Mammalia</taxon>
        <taxon>Eutheria</taxon>
        <taxon>Euarchontoglires</taxon>
        <taxon>Glires</taxon>
        <taxon>Rodentia</taxon>
        <taxon>Myomorpha</taxon>
        <taxon>Muroidea</taxon>
        <taxon>Muridae</taxon>
        <taxon>Murinae</taxon>
        <taxon>Rattus</taxon>
    </lineage>
</organism>
<reference key="1">
    <citation type="journal article" date="1999" name="Biochem. Biophys. Res. Commun.">
        <title>Identification of a novel kinase-like gene induced during neuronal cell death.</title>
        <authorList>
            <person name="Mayumi-Matsuda K."/>
            <person name="Kojima S."/>
            <person name="Suzuki H."/>
            <person name="Sakata T."/>
        </authorList>
    </citation>
    <scope>NUCLEOTIDE SEQUENCE [MRNA]</scope>
    <source>
        <tissue>Neuron</tissue>
    </source>
</reference>
<reference key="2">
    <citation type="journal article" date="2004" name="Genome Res.">
        <title>The status, quality, and expansion of the NIH full-length cDNA project: the Mammalian Gene Collection (MGC).</title>
        <authorList>
            <consortium name="The MGC Project Team"/>
        </authorList>
    </citation>
    <scope>NUCLEOTIDE SEQUENCE [LARGE SCALE MRNA]</scope>
    <source>
        <tissue>Liver</tissue>
    </source>
</reference>
<reference key="3">
    <citation type="journal article" date="2005" name="Biochem. J.">
        <title>Lack of evidence for a role of TRB3/NIPK as inhibitor of PKB-mediated insulin signaling in primary hepatocytes.</title>
        <authorList>
            <person name="Iynedjian P.B."/>
        </authorList>
    </citation>
    <scope>FUNCTION</scope>
</reference>
<name>TRIB3_RAT</name>
<proteinExistence type="evidence at transcript level"/>
<gene>
    <name type="primary">Trib3</name>
    <name type="synonym">Nipk</name>
</gene>
<dbReference type="EMBL" id="AB020967">
    <property type="protein sequence ID" value="BAA77582.1"/>
    <property type="molecule type" value="mRNA"/>
</dbReference>
<dbReference type="EMBL" id="BC091120">
    <property type="protein sequence ID" value="AAH91120.1"/>
    <property type="molecule type" value="mRNA"/>
</dbReference>
<dbReference type="RefSeq" id="NP_653356.1">
    <property type="nucleotide sequence ID" value="NM_144755.2"/>
</dbReference>
<dbReference type="SMR" id="Q9WTQ6"/>
<dbReference type="BioGRID" id="251567">
    <property type="interactions" value="1"/>
</dbReference>
<dbReference type="FunCoup" id="Q9WTQ6">
    <property type="interactions" value="281"/>
</dbReference>
<dbReference type="STRING" id="10116.ENSRNOP00000009840"/>
<dbReference type="GlyGen" id="Q9WTQ6">
    <property type="glycosylation" value="1 site"/>
</dbReference>
<dbReference type="PhosphoSitePlus" id="Q9WTQ6"/>
<dbReference type="PaxDb" id="10116-ENSRNOP00000009840"/>
<dbReference type="Ensembl" id="ENSRNOT00000009840.6">
    <property type="protein sequence ID" value="ENSRNOP00000009840.3"/>
    <property type="gene ID" value="ENSRNOG00000007319.8"/>
</dbReference>
<dbReference type="GeneID" id="246273"/>
<dbReference type="KEGG" id="rno:246273"/>
<dbReference type="UCSC" id="RGD:708432">
    <property type="organism name" value="rat"/>
</dbReference>
<dbReference type="AGR" id="RGD:708432"/>
<dbReference type="CTD" id="57761"/>
<dbReference type="RGD" id="708432">
    <property type="gene designation" value="Trib3"/>
</dbReference>
<dbReference type="eggNOG" id="KOG0583">
    <property type="taxonomic scope" value="Eukaryota"/>
</dbReference>
<dbReference type="GeneTree" id="ENSGT00950000182986"/>
<dbReference type="HOGENOM" id="CLU_000288_13_1_1"/>
<dbReference type="InParanoid" id="Q9WTQ6"/>
<dbReference type="OMA" id="CPTRKQA"/>
<dbReference type="OrthoDB" id="410920at2759"/>
<dbReference type="PhylomeDB" id="Q9WTQ6"/>
<dbReference type="TreeFam" id="TF329785"/>
<dbReference type="Reactome" id="R-RNO-1257604">
    <property type="pathway name" value="PIP3 activates AKT signaling"/>
</dbReference>
<dbReference type="Reactome" id="R-RNO-165158">
    <property type="pathway name" value="Activation of AKT2"/>
</dbReference>
<dbReference type="Reactome" id="R-RNO-199418">
    <property type="pathway name" value="Negative regulation of the PI3K/AKT network"/>
</dbReference>
<dbReference type="Reactome" id="R-RNO-389357">
    <property type="pathway name" value="CD28 dependent PI3K/Akt signaling"/>
</dbReference>
<dbReference type="Reactome" id="R-RNO-5218920">
    <property type="pathway name" value="VEGFR2 mediated vascular permeability"/>
</dbReference>
<dbReference type="PRO" id="PR:Q9WTQ6"/>
<dbReference type="Proteomes" id="UP000002494">
    <property type="component" value="Chromosome 3"/>
</dbReference>
<dbReference type="Bgee" id="ENSRNOG00000007319">
    <property type="expression patterns" value="Expressed in jejunum and 15 other cell types or tissues"/>
</dbReference>
<dbReference type="GO" id="GO:0005654">
    <property type="term" value="C:nucleoplasm"/>
    <property type="evidence" value="ECO:0007669"/>
    <property type="project" value="Ensembl"/>
</dbReference>
<dbReference type="GO" id="GO:0005634">
    <property type="term" value="C:nucleus"/>
    <property type="evidence" value="ECO:0000250"/>
    <property type="project" value="UniProtKB"/>
</dbReference>
<dbReference type="GO" id="GO:0005524">
    <property type="term" value="F:ATP binding"/>
    <property type="evidence" value="ECO:0007669"/>
    <property type="project" value="InterPro"/>
</dbReference>
<dbReference type="GO" id="GO:0019899">
    <property type="term" value="F:enzyme binding"/>
    <property type="evidence" value="ECO:0000266"/>
    <property type="project" value="RGD"/>
</dbReference>
<dbReference type="GO" id="GO:0031434">
    <property type="term" value="F:mitogen-activated protein kinase kinase binding"/>
    <property type="evidence" value="ECO:0000318"/>
    <property type="project" value="GO_Central"/>
</dbReference>
<dbReference type="GO" id="GO:0019901">
    <property type="term" value="F:protein kinase binding"/>
    <property type="evidence" value="ECO:0000250"/>
    <property type="project" value="UniProtKB"/>
</dbReference>
<dbReference type="GO" id="GO:0030291">
    <property type="term" value="F:protein serine/threonine kinase inhibitor activity"/>
    <property type="evidence" value="ECO:0007669"/>
    <property type="project" value="Ensembl"/>
</dbReference>
<dbReference type="GO" id="GO:0003714">
    <property type="term" value="F:transcription corepressor activity"/>
    <property type="evidence" value="ECO:0000250"/>
    <property type="project" value="UniProtKB"/>
</dbReference>
<dbReference type="GO" id="GO:1990757">
    <property type="term" value="F:ubiquitin ligase activator activity"/>
    <property type="evidence" value="ECO:0007669"/>
    <property type="project" value="Ensembl"/>
</dbReference>
<dbReference type="GO" id="GO:0031625">
    <property type="term" value="F:ubiquitin protein ligase binding"/>
    <property type="evidence" value="ECO:0000266"/>
    <property type="project" value="RGD"/>
</dbReference>
<dbReference type="GO" id="GO:0055106">
    <property type="term" value="F:ubiquitin-protein transferase regulator activity"/>
    <property type="evidence" value="ECO:0000266"/>
    <property type="project" value="RGD"/>
</dbReference>
<dbReference type="GO" id="GO:0032869">
    <property type="term" value="P:cellular response to insulin stimulus"/>
    <property type="evidence" value="ECO:0000266"/>
    <property type="project" value="RGD"/>
</dbReference>
<dbReference type="GO" id="GO:0070059">
    <property type="term" value="P:intrinsic apoptotic signaling pathway in response to endoplasmic reticulum stress"/>
    <property type="evidence" value="ECO:0000250"/>
    <property type="project" value="UniProtKB"/>
</dbReference>
<dbReference type="GO" id="GO:0045892">
    <property type="term" value="P:negative regulation of DNA-templated transcription"/>
    <property type="evidence" value="ECO:0000250"/>
    <property type="project" value="UniProtKB"/>
</dbReference>
<dbReference type="GO" id="GO:0045599">
    <property type="term" value="P:negative regulation of fat cell differentiation"/>
    <property type="evidence" value="ECO:0000266"/>
    <property type="project" value="RGD"/>
</dbReference>
<dbReference type="GO" id="GO:0045717">
    <property type="term" value="P:negative regulation of fatty acid biosynthetic process"/>
    <property type="evidence" value="ECO:0000266"/>
    <property type="project" value="RGD"/>
</dbReference>
<dbReference type="GO" id="GO:0046627">
    <property type="term" value="P:negative regulation of insulin receptor signaling pathway"/>
    <property type="evidence" value="ECO:0007669"/>
    <property type="project" value="Ensembl"/>
</dbReference>
<dbReference type="GO" id="GO:0043409">
    <property type="term" value="P:negative regulation of MAPK cascade"/>
    <property type="evidence" value="ECO:0007669"/>
    <property type="project" value="Ensembl"/>
</dbReference>
<dbReference type="GO" id="GO:0006469">
    <property type="term" value="P:negative regulation of protein kinase activity"/>
    <property type="evidence" value="ECO:0000250"/>
    <property type="project" value="UniProtKB"/>
</dbReference>
<dbReference type="GO" id="GO:0000122">
    <property type="term" value="P:negative regulation of transcription by RNA polymerase II"/>
    <property type="evidence" value="ECO:0000266"/>
    <property type="project" value="RGD"/>
</dbReference>
<dbReference type="GO" id="GO:0032436">
    <property type="term" value="P:positive regulation of proteasomal ubiquitin-dependent protein catabolic process"/>
    <property type="evidence" value="ECO:0000318"/>
    <property type="project" value="GO_Central"/>
</dbReference>
<dbReference type="GO" id="GO:0012501">
    <property type="term" value="P:programmed cell death"/>
    <property type="evidence" value="ECO:0000303"/>
    <property type="project" value="RGD"/>
</dbReference>
<dbReference type="GO" id="GO:0010506">
    <property type="term" value="P:regulation of autophagy"/>
    <property type="evidence" value="ECO:0000315"/>
    <property type="project" value="UniProtKB"/>
</dbReference>
<dbReference type="GO" id="GO:0010827">
    <property type="term" value="P:regulation of D-glucose transmembrane transport"/>
    <property type="evidence" value="ECO:0000266"/>
    <property type="project" value="RGD"/>
</dbReference>
<dbReference type="GO" id="GO:0043405">
    <property type="term" value="P:regulation of MAP kinase activity"/>
    <property type="evidence" value="ECO:0000250"/>
    <property type="project" value="UniProtKB"/>
</dbReference>
<dbReference type="GO" id="GO:0034976">
    <property type="term" value="P:response to endoplasmic reticulum stress"/>
    <property type="evidence" value="ECO:0000250"/>
    <property type="project" value="UniProtKB"/>
</dbReference>
<dbReference type="FunFam" id="1.10.510.10:FF:000153">
    <property type="entry name" value="Tribbles homolog 2"/>
    <property type="match status" value="1"/>
</dbReference>
<dbReference type="FunFam" id="3.30.200.20:FF:000439">
    <property type="entry name" value="Tribbles pseudokinase 3"/>
    <property type="match status" value="1"/>
</dbReference>
<dbReference type="Gene3D" id="3.30.200.20">
    <property type="entry name" value="Phosphorylase Kinase, domain 1"/>
    <property type="match status" value="1"/>
</dbReference>
<dbReference type="Gene3D" id="1.10.510.10">
    <property type="entry name" value="Transferase(Phosphotransferase) domain 1"/>
    <property type="match status" value="1"/>
</dbReference>
<dbReference type="InterPro" id="IPR011009">
    <property type="entry name" value="Kinase-like_dom_sf"/>
</dbReference>
<dbReference type="InterPro" id="IPR000719">
    <property type="entry name" value="Prot_kinase_dom"/>
</dbReference>
<dbReference type="InterPro" id="IPR024104">
    <property type="entry name" value="Tribbles/Ser_Thr_kinase_40"/>
</dbReference>
<dbReference type="PANTHER" id="PTHR22961">
    <property type="entry name" value="SER/THR PROTEIN KINASE-TRB"/>
    <property type="match status" value="1"/>
</dbReference>
<dbReference type="PANTHER" id="PTHR22961:SF14">
    <property type="entry name" value="TRIBBLES HOMOLOG 3"/>
    <property type="match status" value="1"/>
</dbReference>
<dbReference type="Pfam" id="PF00069">
    <property type="entry name" value="Pkinase"/>
    <property type="match status" value="1"/>
</dbReference>
<dbReference type="SMART" id="SM00220">
    <property type="entry name" value="S_TKc"/>
    <property type="match status" value="1"/>
</dbReference>
<dbReference type="SUPFAM" id="SSF56112">
    <property type="entry name" value="Protein kinase-like (PK-like)"/>
    <property type="match status" value="1"/>
</dbReference>
<dbReference type="PROSITE" id="PS50011">
    <property type="entry name" value="PROTEIN_KINASE_DOM"/>
    <property type="match status" value="1"/>
</dbReference>
<evidence type="ECO:0000250" key="1"/>
<evidence type="ECO:0000250" key="2">
    <source>
        <dbReference type="UniProtKB" id="Q8K4K2"/>
    </source>
</evidence>
<evidence type="ECO:0000250" key="3">
    <source>
        <dbReference type="UniProtKB" id="Q96RU7"/>
    </source>
</evidence>
<evidence type="ECO:0000255" key="4">
    <source>
        <dbReference type="PROSITE-ProRule" id="PRU00159"/>
    </source>
</evidence>
<evidence type="ECO:0000256" key="5">
    <source>
        <dbReference type="SAM" id="MobiDB-lite"/>
    </source>
</evidence>
<evidence type="ECO:0000269" key="6">
    <source>
    </source>
</evidence>
<evidence type="ECO:0000305" key="7"/>
<comment type="function">
    <text evidence="2 3 6">Inactive protein kinase which acts as a regulator of the integrated stress response (ISR), a process for adaptation to various stress (By similarity). Inhibits the transcriptional activity of DDIT3/CHOP and is involved in DDIT3/CHOP-dependent cell death during ER stress. May play a role in programmed neuronal cell death but does not appear to affect non-neuronal cells (By similarity). Acts as a negative feedback regulator of the ATF4-dependent transcription during the ISR: while TRIB3 expression is promoted by ATF4, TRIB3 protein interacts with ATF4 and inhibits ATF4 transcription activity (By similarity). Disrupts insulin signaling by binding directly to Akt kinases and blocking their activation (PubMed:15469416). May bind directly to and mask the 'Thr-308' phosphorylation site in AKT1 (By similarity). Interacts with the NF-kappa-B transactivator p65 RELA and inhibits its phosphorylation and thus its transcriptional activation activity. Interacts with MAPK kinases and regulates activation of MAP kinases (By similarity). Can inhibit APOBEC3A editing of nuclear DNA (By similarity).</text>
</comment>
<comment type="subunit">
    <text evidence="2 3">Interacts with AKT1, AKT2, MAP2K1 and MAP2K7. Interacts with ATF4 (By similarity). Interacts with DDIT3/CHOP and inhibits its interaction with EP300/P300. Interacts with APOBEC3C (By similarity). Interacts (via N-terminus) with APOBEC3A (By similarity). Interacts with RELA (By similarity).</text>
</comment>
<comment type="subcellular location">
    <subcellularLocation>
        <location evidence="2">Nucleus</location>
    </subcellularLocation>
</comment>
<comment type="tissue specificity">
    <text>Detected only in the lung. Not detected in the heart, brain, spleen, liver, skeletal muscle, kidney and testis.</text>
</comment>
<comment type="induction">
    <text>Expression induced during programmed cell death evoked in neuronal cells by NGF-depletion.</text>
</comment>
<comment type="domain">
    <text>The protein kinase domain is predicted to be catalytically inactive.</text>
</comment>
<comment type="similarity">
    <text evidence="7">Belongs to the protein kinase superfamily. CAMK Ser/Thr protein kinase family. Tribbles subfamily.</text>
</comment>
<comment type="caution">
    <text evidence="7">The role of this protein in Akt activation has been demonstrated by Du et al for the mouse ortholog but PubMed:15469416 has not been able to reproduce the result in rat hepatocytes.</text>
</comment>
<accession>Q9WTQ6</accession>
<accession>Q5BKD1</accession>
<protein>
    <recommendedName>
        <fullName>Tribbles homolog 3</fullName>
        <shortName>TRB-3</shortName>
    </recommendedName>
    <alternativeName>
        <fullName>Neuronal cell death-inducible putative kinase</fullName>
    </alternativeName>
</protein>
<sequence>MRATSLAASADVPCRKKPLEFDDNIDVECPVLKRVRDEPEPGPTPSLPPASDLSPAVAPATRLGPYILLEREQGNCTYRALHCPTGTEYTCKVYPASEAQAVLAPYARLPTHQHVARPTEVLLGSQLLYTFFTKTHGDLHSLVRSRRGIPEPEAAALFRQMASAVAHCHKHGLILRDLKLRRFVFSNCERTKLVLENLEDACVMTGPDDSLWDKHACPAYVGPEILSSRPSYSGRAADVWSLGVALFTMLAGRYPFQDSEPALLFGKIRRGTFALPEGLSASARCLIRCLLRREPSERLVALGILLHPWLREDCSQVSPPRSDRREMDQVVPDGPQLEEAEEGEVGLYG</sequence>